<comment type="function">
    <text evidence="2 3 4">Cargo receptor involved in protein vesicular trafficking and quality control in the endoplasmic reticulum (ER) and Golgi. The p24 protein family is a group of transmembrane proteins that bind coat protein complex I/COPI and coat protein complex II/COPII involved in vesicular trafficking between the membranes. Acts at the lumenal side for incorporation of secretory cargo molecules into transport vesicles and involved in vesicle coat formation at the cytoplasmic side. Mainly functions in the early secretory pathway and cycles between the ER, ER-Golgi intermediate compartment (ERGIC) and Golgi, mediating cargo transport through COPI and COPII-coated vesicles. In COPII vesicle-mediated anterograde transport, involved in the transport of GPI-anchored proteins by acting together with TMED2 as their cargo receptor; the function specifically implies SEC24C and SEC24D of the COPII vesicle coat and lipid raft-like microdomains of the ER (By similarity). Recognizes GPI anchors structural remodeled in the ER by the GPI inositol-deacylase/PGAP1 and the metallophosphoesterase MPPE1/PGAP5 (By similarity). In COPI vesicle-mediated retrograde transport, involved in the biogenesis of COPI vesicles and vesicle coat recruitment. Involved in trafficking of amyloid beta A4 protein and soluble APP-beta release (independent from the modulation of gamma-secretase activity) (By similarity). Involved in the KDELR2-mediated retrograde transport of the toxin A subunit (CTX-A-K63)together with COPI and the COOH terminus of KDELR2 (By similarity). On Golgi membranes, acts as a primary receptor for ARF1-GDP, a GTP-binding protein involved in COPI-vesicle formation. Increases coatomer-dependent GTPase-activating activity of ARFGAP2 which mediates the hydrolysis of ARF1-bound GTP and therefore modulates protein trafficking from the Golgi apparatus. Involved in the exocytic trafficking of G protein-coupled receptors F2LR1/PAR2 (trypsin and tryspin-like enzyme receptor), OPRM1 (opioid receptor) and P2RY4 (UTD and UDP receptor) from the Golgi to the plasma membrane, thus contributing to receptor resensitization. In addition to its cargo receptor activity, may also act as a protein channel after oligomerization, facilitating the post-translational entry of leaderless cytoplasmic cargo into the ERGIC. Involved in the translocation into ERGIC, the vesicle entry and the secretion of leaderless cargos (lacking the secretion signal sequence), including the mature form of interleukin 1/IL-1 family members, the alpha-crystallin B chain HSPB5, the carbohydrate-binding proteins galectin-1/LGALS1 and galectin-3/LGALS3, the microtubule-associated protein Tau/MAPT, and the annexin A1/ANXA1; the translocation process is dependent on cargo protein unfolding and enhanced by chaperones HSP90AB1 and HSP90B1/GRP9. Could also associates with the presenilin-dependent gamma-secretase complex in order to regulate gamma-cleavages of the amyloid beta A4 protein to yield amyloid-beta 40/Abeta40 (By similarity).</text>
</comment>
<comment type="subunit">
    <text evidence="2 3 4">Predominantly dimeric and to a lesser extent monomeric in the ER. Monomer and dimer in ERGIC and cis-Golgi network. Forms homooligomer (via GOLD domain); the assembly is promoted by direct binding with leaderless cargos and may form a protein channel that facilitates cargo entry into the ERGIC. Forms heterooligomeric complexes with other members of the p24 family such as TMED2, TMED7 and TMED9. Interacts (via GOLD domain) with TMED2 (via GOLD domain); the complex is required for export of TMED10 from the ER to the cis-Golgi network; the complex is proposed to be involved in cis-Golgi network dynamics and / or biogenesis. Associates with the COPI vesicle coat subunits (coatomer) (By similarity). Tetramerization of the cytoplasmic domain at the Golgi membrane in vitro; the complex is proposed to interact with COPI coatomer and induce budding of the vesicles (By similarity). Interacts with COPG1; the interaction involves TMED10 homodimer. Interacts with ARF1 (GDP-bound); the interaction probably involves a TMED10 oligomer. Interacts with SEC23A, SEC24B, SEC24C and SEC24D components of the coat protein complex II/COPII, indicative of an association of TMED10 with the COPII vesicle coat. Interacts with CD59. Interacts with MPPE1/PGAP5; the complex might recruit and sort GPI-anchored proteins to the ER-exit site, or the interaction might lead to recycling of PGAP5 between the ER and the Golgi. Interacts with F2LR1/PAR2 (By similarity). Interacts with KDELR2/ERD2; the interaction is disrupted by KDELR2 ligand (By similarity). Found in a complex composed at least of SURF4, TMED2 and TMED10. Associates with the presenilin-dependent gamma-secretase complex. Interacts with STX17; the interaction is direct. Interacts with IL-1; the interaction is direct. Interacts with RAB21 (active GTP-bound form); the interaction is indirect and regulates TMED10 abundance and localization at the Golgi (By similarity).</text>
</comment>
<comment type="subcellular location">
    <subcellularLocation>
        <location evidence="2">Endoplasmic reticulum membrane</location>
        <topology evidence="5">Single-pass type I membrane protein</topology>
    </subcellularLocation>
    <subcellularLocation>
        <location evidence="2">Endoplasmic reticulum-Golgi intermediate compartment membrane</location>
        <topology evidence="5">Single-pass type I membrane protein</topology>
    </subcellularLocation>
    <subcellularLocation>
        <location evidence="2">Golgi apparatus membrane</location>
        <topology evidence="5">Single-pass type I membrane protein</topology>
    </subcellularLocation>
    <subcellularLocation>
        <location evidence="2">Golgi apparatus</location>
        <location evidence="2">cis-Golgi network membrane</location>
        <topology evidence="5">Single-pass type I membrane protein</topology>
    </subcellularLocation>
    <subcellularLocation>
        <location evidence="4">Golgi apparatus</location>
        <location evidence="4">trans-Golgi network membrane</location>
        <topology evidence="5">Single-pass type I membrane protein</topology>
    </subcellularLocation>
    <subcellularLocation>
        <location evidence="2">Cytoplasmic vesicle</location>
        <location evidence="2">Secretory vesicle membrane</location>
        <topology evidence="5">Single-pass type I membrane protein</topology>
    </subcellularLocation>
    <subcellularLocation>
        <location evidence="4">Cell membrane</location>
        <topology evidence="5">Single-pass type I membrane protein</topology>
    </subcellularLocation>
    <subcellularLocation>
        <location evidence="2">Melanosome</location>
    </subcellularLocation>
</comment>
<comment type="domain">
    <text evidence="2">The GOLD domain is required for proper p24 heterooligomeric complex formation and efficient transport of GPI-anchored proteins.</text>
</comment>
<comment type="domain">
    <text evidence="4">The lumenal domain mediates localization to the plasma membrane by partially overriding the ER retention by the cytoplasmic domain.</text>
</comment>
<comment type="miscellaneous">
    <text evidence="2">Ectopic expression of TMED10 alone does not result in its proper cis-Golgi network localization. Interaction of TMED10 with TMED2 is both necessary and sufficient for transport of the couple to the cis-Golgi network, and TMED3 and/or TMED9 contribute to facilitating the process.</text>
</comment>
<comment type="similarity">
    <text evidence="7">Belongs to the EMP24/GP25L family.</text>
</comment>
<evidence type="ECO:0000250" key="1"/>
<evidence type="ECO:0000250" key="2">
    <source>
        <dbReference type="UniProtKB" id="P49755"/>
    </source>
</evidence>
<evidence type="ECO:0000250" key="3">
    <source>
        <dbReference type="UniProtKB" id="Q28735"/>
    </source>
</evidence>
<evidence type="ECO:0000250" key="4">
    <source>
        <dbReference type="UniProtKB" id="Q63584"/>
    </source>
</evidence>
<evidence type="ECO:0000255" key="5"/>
<evidence type="ECO:0000255" key="6">
    <source>
        <dbReference type="PROSITE-ProRule" id="PRU00096"/>
    </source>
</evidence>
<evidence type="ECO:0000305" key="7"/>
<gene>
    <name type="primary">TMED10</name>
    <name type="synonym">TMP21</name>
</gene>
<feature type="signal peptide" evidence="1">
    <location>
        <begin position="1"/>
        <end position="31"/>
    </location>
</feature>
<feature type="chain" id="PRO_0000010402" description="Transmembrane emp24 domain-containing protein 10">
    <location>
        <begin position="32"/>
        <end position="219"/>
    </location>
</feature>
<feature type="topological domain" description="Lumenal" evidence="7">
    <location>
        <begin position="32"/>
        <end position="185"/>
    </location>
</feature>
<feature type="transmembrane region" description="Helical" evidence="5">
    <location>
        <begin position="186"/>
        <end position="206"/>
    </location>
</feature>
<feature type="topological domain" description="Cytoplasmic" evidence="7">
    <location>
        <begin position="207"/>
        <end position="219"/>
    </location>
</feature>
<feature type="domain" description="GOLD" evidence="6">
    <location>
        <begin position="41"/>
        <end position="193"/>
    </location>
</feature>
<feature type="region of interest" description="Required for interaction with STX17" evidence="1">
    <location>
        <begin position="1"/>
        <end position="142"/>
    </location>
</feature>
<feature type="region of interest" description="Interaction with COPG1" evidence="1">
    <location>
        <begin position="204"/>
        <end position="219"/>
    </location>
</feature>
<feature type="region of interest" description="Interaction with ARF1 and IL1B" evidence="2">
    <location>
        <begin position="207"/>
        <end position="219"/>
    </location>
</feature>
<feature type="short sequence motif" description="COPI vesicle coat-binding" evidence="5">
    <location>
        <begin position="211"/>
        <end position="219"/>
    </location>
</feature>
<feature type="short sequence motif" description="COPII vesicle coat-binding" evidence="5">
    <location>
        <begin position="211"/>
        <end position="212"/>
    </location>
</feature>
<feature type="modified residue" description="Dimethylated arginine" evidence="4">
    <location>
        <position position="171"/>
    </location>
</feature>
<feature type="modified residue" description="Dimethylated arginine" evidence="4">
    <location>
        <position position="176"/>
    </location>
</feature>
<feature type="glycosylation site" description="N-linked (GlcNAc...) asparagine" evidence="5">
    <location>
        <position position="179"/>
    </location>
</feature>
<proteinExistence type="evidence at transcript level"/>
<dbReference type="EMBL" id="CR857706">
    <property type="protein sequence ID" value="CAH89975.1"/>
    <property type="molecule type" value="mRNA"/>
</dbReference>
<dbReference type="RefSeq" id="NP_001124930.1">
    <property type="nucleotide sequence ID" value="NM_001131458.1"/>
</dbReference>
<dbReference type="SMR" id="Q5RE32"/>
<dbReference type="FunCoup" id="Q5RE32">
    <property type="interactions" value="2915"/>
</dbReference>
<dbReference type="STRING" id="9601.ENSPPYP00000024352"/>
<dbReference type="GlyCosmos" id="Q5RE32">
    <property type="glycosylation" value="1 site, No reported glycans"/>
</dbReference>
<dbReference type="GeneID" id="100171801"/>
<dbReference type="KEGG" id="pon:100171801"/>
<dbReference type="CTD" id="10972"/>
<dbReference type="InParanoid" id="Q5RE32"/>
<dbReference type="OrthoDB" id="759142at2759"/>
<dbReference type="Proteomes" id="UP000001595">
    <property type="component" value="Unplaced"/>
</dbReference>
<dbReference type="GO" id="GO:0030137">
    <property type="term" value="C:COPI-coated vesicle"/>
    <property type="evidence" value="ECO:0000250"/>
    <property type="project" value="UniProtKB"/>
</dbReference>
<dbReference type="GO" id="GO:0005789">
    <property type="term" value="C:endoplasmic reticulum membrane"/>
    <property type="evidence" value="ECO:0007669"/>
    <property type="project" value="UniProtKB-SubCell"/>
</dbReference>
<dbReference type="GO" id="GO:0005793">
    <property type="term" value="C:endoplasmic reticulum-Golgi intermediate compartment"/>
    <property type="evidence" value="ECO:0000250"/>
    <property type="project" value="UniProtKB"/>
</dbReference>
<dbReference type="GO" id="GO:0033116">
    <property type="term" value="C:endoplasmic reticulum-Golgi intermediate compartment membrane"/>
    <property type="evidence" value="ECO:0007669"/>
    <property type="project" value="UniProtKB-SubCell"/>
</dbReference>
<dbReference type="GO" id="GO:0070765">
    <property type="term" value="C:gamma-secretase complex"/>
    <property type="evidence" value="ECO:0000250"/>
    <property type="project" value="UniProtKB"/>
</dbReference>
<dbReference type="GO" id="GO:0000139">
    <property type="term" value="C:Golgi membrane"/>
    <property type="evidence" value="ECO:0007669"/>
    <property type="project" value="UniProtKB-SubCell"/>
</dbReference>
<dbReference type="GO" id="GO:0042470">
    <property type="term" value="C:melanosome"/>
    <property type="evidence" value="ECO:0007669"/>
    <property type="project" value="UniProtKB-SubCell"/>
</dbReference>
<dbReference type="GO" id="GO:0005886">
    <property type="term" value="C:plasma membrane"/>
    <property type="evidence" value="ECO:0000250"/>
    <property type="project" value="UniProtKB"/>
</dbReference>
<dbReference type="GO" id="GO:0030667">
    <property type="term" value="C:secretory granule membrane"/>
    <property type="evidence" value="ECO:0000250"/>
    <property type="project" value="UniProtKB"/>
</dbReference>
<dbReference type="GO" id="GO:0030140">
    <property type="term" value="C:trans-Golgi network transport vesicle"/>
    <property type="evidence" value="ECO:0000250"/>
    <property type="project" value="UniProtKB"/>
</dbReference>
<dbReference type="GO" id="GO:0030658">
    <property type="term" value="C:transport vesicle membrane"/>
    <property type="evidence" value="ECO:0007669"/>
    <property type="project" value="UniProtKB-SubCell"/>
</dbReference>
<dbReference type="GO" id="GO:0008320">
    <property type="term" value="F:protein transmembrane transporter activity"/>
    <property type="evidence" value="ECO:0000250"/>
    <property type="project" value="UniProtKB"/>
</dbReference>
<dbReference type="GO" id="GO:0035964">
    <property type="term" value="P:COPI-coated vesicle budding"/>
    <property type="evidence" value="ECO:0000250"/>
    <property type="project" value="UniProtKB"/>
</dbReference>
<dbReference type="GO" id="GO:0106273">
    <property type="term" value="P:cytosol to ERGIC protein transport"/>
    <property type="evidence" value="ECO:0000250"/>
    <property type="project" value="UniProtKB"/>
</dbReference>
<dbReference type="GO" id="GO:0032732">
    <property type="term" value="P:positive regulation of interleukin-1 production"/>
    <property type="evidence" value="ECO:0000250"/>
    <property type="project" value="UniProtKB"/>
</dbReference>
<dbReference type="GO" id="GO:0050714">
    <property type="term" value="P:positive regulation of protein secretion"/>
    <property type="evidence" value="ECO:0000250"/>
    <property type="project" value="UniProtKB"/>
</dbReference>
<dbReference type="GO" id="GO:0106272">
    <property type="term" value="P:protein localization to ERGIC"/>
    <property type="evidence" value="ECO:0000250"/>
    <property type="project" value="UniProtKB"/>
</dbReference>
<dbReference type="GO" id="GO:1902003">
    <property type="term" value="P:regulation of amyloid-beta formation"/>
    <property type="evidence" value="ECO:0000250"/>
    <property type="project" value="UniProtKB"/>
</dbReference>
<dbReference type="GO" id="GO:0006890">
    <property type="term" value="P:retrograde vesicle-mediated transport, Golgi to endoplasmic reticulum"/>
    <property type="evidence" value="ECO:0000250"/>
    <property type="project" value="UniProtKB"/>
</dbReference>
<dbReference type="InterPro" id="IPR015720">
    <property type="entry name" value="Emp24-like"/>
</dbReference>
<dbReference type="InterPro" id="IPR009038">
    <property type="entry name" value="GOLD_dom"/>
</dbReference>
<dbReference type="PANTHER" id="PTHR22811">
    <property type="entry name" value="TRANSMEMBRANE EMP24 DOMAIN-CONTAINING PROTEIN"/>
    <property type="match status" value="1"/>
</dbReference>
<dbReference type="Pfam" id="PF01105">
    <property type="entry name" value="EMP24_GP25L"/>
    <property type="match status" value="1"/>
</dbReference>
<dbReference type="SMART" id="SM01190">
    <property type="entry name" value="EMP24_GP25L"/>
    <property type="match status" value="1"/>
</dbReference>
<dbReference type="PROSITE" id="PS50866">
    <property type="entry name" value="GOLD"/>
    <property type="match status" value="1"/>
</dbReference>
<organism>
    <name type="scientific">Pongo abelii</name>
    <name type="common">Sumatran orangutan</name>
    <name type="synonym">Pongo pygmaeus abelii</name>
    <dbReference type="NCBI Taxonomy" id="9601"/>
    <lineage>
        <taxon>Eukaryota</taxon>
        <taxon>Metazoa</taxon>
        <taxon>Chordata</taxon>
        <taxon>Craniata</taxon>
        <taxon>Vertebrata</taxon>
        <taxon>Euteleostomi</taxon>
        <taxon>Mammalia</taxon>
        <taxon>Eutheria</taxon>
        <taxon>Euarchontoglires</taxon>
        <taxon>Primates</taxon>
        <taxon>Haplorrhini</taxon>
        <taxon>Catarrhini</taxon>
        <taxon>Hominidae</taxon>
        <taxon>Pongo</taxon>
    </lineage>
</organism>
<accession>Q5RE32</accession>
<sequence>MSGLSGPPTRRGPFPLALLLLFLLGPSLVLAISFHLPINSRKCLREEIHKDLLVTGAYEISDQSGGAGGLRSHLKITDSAGHILYSKEDATKGKFAFTTEDYDMFEVCFESKGTGRIPDQLVILDMKHGVEAKNYEEIAKVEKLKPLEVELRRLEDLSESIVNDFAYMEKREEEMRDTNESTNTRVLYFSIFSMFCLIGLATWQVFYLRRFFKAKKLIE</sequence>
<name>TMEDA_PONAB</name>
<keyword id="KW-1003">Cell membrane</keyword>
<keyword id="KW-0968">Cytoplasmic vesicle</keyword>
<keyword id="KW-0256">Endoplasmic reticulum</keyword>
<keyword id="KW-0931">ER-Golgi transport</keyword>
<keyword id="KW-0325">Glycoprotein</keyword>
<keyword id="KW-0333">Golgi apparatus</keyword>
<keyword id="KW-0472">Membrane</keyword>
<keyword id="KW-0488">Methylation</keyword>
<keyword id="KW-0653">Protein transport</keyword>
<keyword id="KW-1185">Reference proteome</keyword>
<keyword id="KW-0732">Signal</keyword>
<keyword id="KW-0812">Transmembrane</keyword>
<keyword id="KW-1133">Transmembrane helix</keyword>
<keyword id="KW-0813">Transport</keyword>
<reference key="1">
    <citation type="submission" date="2004-11" db="EMBL/GenBank/DDBJ databases">
        <authorList>
            <consortium name="The German cDNA consortium"/>
        </authorList>
    </citation>
    <scope>NUCLEOTIDE SEQUENCE [LARGE SCALE MRNA]</scope>
    <source>
        <tissue>Brain cortex</tissue>
    </source>
</reference>
<protein>
    <recommendedName>
        <fullName>Transmembrane emp24 domain-containing protein 10</fullName>
        <shortName>Protein TMED10</shortName>
    </recommendedName>
    <alternativeName>
        <fullName>21 kDa transmembrane-trafficking protein</fullName>
    </alternativeName>
    <alternativeName>
        <fullName>Transmembrane protein Tmp21</fullName>
    </alternativeName>
    <alternativeName>
        <fullName>p24 family protein delta-1</fullName>
        <shortName>p24delta1</shortName>
    </alternativeName>
</protein>